<keyword id="KW-0963">Cytoplasm</keyword>
<keyword id="KW-0489">Methyltransferase</keyword>
<keyword id="KW-1185">Reference proteome</keyword>
<keyword id="KW-0698">rRNA processing</keyword>
<keyword id="KW-0949">S-adenosyl-L-methionine</keyword>
<keyword id="KW-0808">Transferase</keyword>
<proteinExistence type="inferred from homology"/>
<accession>A6WX78</accession>
<comment type="function">
    <text evidence="1">Specifically methylates the N7 position of guanine in position 527 of 16S rRNA.</text>
</comment>
<comment type="catalytic activity">
    <reaction evidence="1">
        <text>guanosine(527) in 16S rRNA + S-adenosyl-L-methionine = N(7)-methylguanosine(527) in 16S rRNA + S-adenosyl-L-homocysteine</text>
        <dbReference type="Rhea" id="RHEA:42732"/>
        <dbReference type="Rhea" id="RHEA-COMP:10209"/>
        <dbReference type="Rhea" id="RHEA-COMP:10210"/>
        <dbReference type="ChEBI" id="CHEBI:57856"/>
        <dbReference type="ChEBI" id="CHEBI:59789"/>
        <dbReference type="ChEBI" id="CHEBI:74269"/>
        <dbReference type="ChEBI" id="CHEBI:74480"/>
        <dbReference type="EC" id="2.1.1.170"/>
    </reaction>
</comment>
<comment type="subcellular location">
    <subcellularLocation>
        <location evidence="1">Cytoplasm</location>
    </subcellularLocation>
</comment>
<comment type="similarity">
    <text evidence="1">Belongs to the methyltransferase superfamily. RNA methyltransferase RsmG family.</text>
</comment>
<organism>
    <name type="scientific">Brucella anthropi (strain ATCC 49188 / DSM 6882 / CCUG 24695 / JCM 21032 / LMG 3331 / NBRC 15819 / NCTC 12168 / Alc 37)</name>
    <name type="common">Ochrobactrum anthropi</name>
    <dbReference type="NCBI Taxonomy" id="439375"/>
    <lineage>
        <taxon>Bacteria</taxon>
        <taxon>Pseudomonadati</taxon>
        <taxon>Pseudomonadota</taxon>
        <taxon>Alphaproteobacteria</taxon>
        <taxon>Hyphomicrobiales</taxon>
        <taxon>Brucellaceae</taxon>
        <taxon>Brucella/Ochrobactrum group</taxon>
        <taxon>Brucella</taxon>
    </lineage>
</organism>
<evidence type="ECO:0000255" key="1">
    <source>
        <dbReference type="HAMAP-Rule" id="MF_00074"/>
    </source>
</evidence>
<gene>
    <name evidence="1" type="primary">rsmG</name>
    <name type="ordered locus">Oant_0860</name>
</gene>
<sequence length="213" mass="23490">MSADTRFESLKAIVPAVSRETANRLIAFEDLFRKWSKAINLASPSTLNELWTRHILDSAQLFPLASDAKHWLDIGSGGGFPGIVTACFLAEQPGGAIDLIESAGKKAAFLRTAAGHLHVPARVHSTRIEAMWEKIETPQVVTARALASLNDLFGLTELWLTNGAKALFQKGRDYQREIDESRVGWSFDLVQHQSAIDQASVILEITNLRRKVA</sequence>
<feature type="chain" id="PRO_1000010175" description="Ribosomal RNA small subunit methyltransferase G">
    <location>
        <begin position="1"/>
        <end position="213"/>
    </location>
</feature>
<feature type="binding site" evidence="1">
    <location>
        <position position="75"/>
    </location>
    <ligand>
        <name>S-adenosyl-L-methionine</name>
        <dbReference type="ChEBI" id="CHEBI:59789"/>
    </ligand>
</feature>
<feature type="binding site" evidence="1">
    <location>
        <position position="80"/>
    </location>
    <ligand>
        <name>S-adenosyl-L-methionine</name>
        <dbReference type="ChEBI" id="CHEBI:59789"/>
    </ligand>
</feature>
<feature type="binding site" evidence="1">
    <location>
        <begin position="128"/>
        <end position="129"/>
    </location>
    <ligand>
        <name>S-adenosyl-L-methionine</name>
        <dbReference type="ChEBI" id="CHEBI:59789"/>
    </ligand>
</feature>
<feature type="binding site" evidence="1">
    <location>
        <position position="144"/>
    </location>
    <ligand>
        <name>S-adenosyl-L-methionine</name>
        <dbReference type="ChEBI" id="CHEBI:59789"/>
    </ligand>
</feature>
<protein>
    <recommendedName>
        <fullName evidence="1">Ribosomal RNA small subunit methyltransferase G</fullName>
        <ecNumber evidence="1">2.1.1.170</ecNumber>
    </recommendedName>
    <alternativeName>
        <fullName evidence="1">16S rRNA 7-methylguanosine methyltransferase</fullName>
        <shortName evidence="1">16S rRNA m7G methyltransferase</shortName>
    </alternativeName>
</protein>
<reference key="1">
    <citation type="journal article" date="2011" name="J. Bacteriol.">
        <title>Genome of Ochrobactrum anthropi ATCC 49188 T, a versatile opportunistic pathogen and symbiont of several eukaryotic hosts.</title>
        <authorList>
            <person name="Chain P.S."/>
            <person name="Lang D.M."/>
            <person name="Comerci D.J."/>
            <person name="Malfatti S.A."/>
            <person name="Vergez L.M."/>
            <person name="Shin M."/>
            <person name="Ugalde R.A."/>
            <person name="Garcia E."/>
            <person name="Tolmasky M.E."/>
        </authorList>
    </citation>
    <scope>NUCLEOTIDE SEQUENCE [LARGE SCALE GENOMIC DNA]</scope>
    <source>
        <strain>ATCC 49188 / DSM 6882 / CCUG 24695 / JCM 21032 / LMG 3331 / NBRC 15819 / NCTC 12168 / Alc 37</strain>
    </source>
</reference>
<dbReference type="EC" id="2.1.1.170" evidence="1"/>
<dbReference type="EMBL" id="CP000758">
    <property type="protein sequence ID" value="ABS13582.1"/>
    <property type="molecule type" value="Genomic_DNA"/>
</dbReference>
<dbReference type="RefSeq" id="WP_012091074.1">
    <property type="nucleotide sequence ID" value="NC_009667.1"/>
</dbReference>
<dbReference type="SMR" id="A6WX78"/>
<dbReference type="STRING" id="439375.Oant_0860"/>
<dbReference type="KEGG" id="oan:Oant_0860"/>
<dbReference type="PATRIC" id="fig|439375.7.peg.905"/>
<dbReference type="eggNOG" id="COG0357">
    <property type="taxonomic scope" value="Bacteria"/>
</dbReference>
<dbReference type="HOGENOM" id="CLU_065341_1_1_5"/>
<dbReference type="PhylomeDB" id="A6WX78"/>
<dbReference type="Proteomes" id="UP000002301">
    <property type="component" value="Chromosome 1"/>
</dbReference>
<dbReference type="GO" id="GO:0005829">
    <property type="term" value="C:cytosol"/>
    <property type="evidence" value="ECO:0007669"/>
    <property type="project" value="TreeGrafter"/>
</dbReference>
<dbReference type="GO" id="GO:0070043">
    <property type="term" value="F:rRNA (guanine-N7-)-methyltransferase activity"/>
    <property type="evidence" value="ECO:0007669"/>
    <property type="project" value="UniProtKB-UniRule"/>
</dbReference>
<dbReference type="Gene3D" id="3.40.50.150">
    <property type="entry name" value="Vaccinia Virus protein VP39"/>
    <property type="match status" value="1"/>
</dbReference>
<dbReference type="HAMAP" id="MF_00074">
    <property type="entry name" value="16SrRNA_methyltr_G"/>
    <property type="match status" value="1"/>
</dbReference>
<dbReference type="InterPro" id="IPR003682">
    <property type="entry name" value="rRNA_ssu_MeTfrase_G"/>
</dbReference>
<dbReference type="InterPro" id="IPR029063">
    <property type="entry name" value="SAM-dependent_MTases_sf"/>
</dbReference>
<dbReference type="NCBIfam" id="TIGR00138">
    <property type="entry name" value="rsmG_gidB"/>
    <property type="match status" value="1"/>
</dbReference>
<dbReference type="PANTHER" id="PTHR31760">
    <property type="entry name" value="S-ADENOSYL-L-METHIONINE-DEPENDENT METHYLTRANSFERASES SUPERFAMILY PROTEIN"/>
    <property type="match status" value="1"/>
</dbReference>
<dbReference type="PANTHER" id="PTHR31760:SF0">
    <property type="entry name" value="S-ADENOSYL-L-METHIONINE-DEPENDENT METHYLTRANSFERASES SUPERFAMILY PROTEIN"/>
    <property type="match status" value="1"/>
</dbReference>
<dbReference type="Pfam" id="PF02527">
    <property type="entry name" value="GidB"/>
    <property type="match status" value="1"/>
</dbReference>
<dbReference type="PIRSF" id="PIRSF003078">
    <property type="entry name" value="GidB"/>
    <property type="match status" value="1"/>
</dbReference>
<dbReference type="SUPFAM" id="SSF53335">
    <property type="entry name" value="S-adenosyl-L-methionine-dependent methyltransferases"/>
    <property type="match status" value="1"/>
</dbReference>
<name>RSMG_BRUA4</name>